<keyword id="KW-0125">Carotenoid biosynthesis</keyword>
<keyword id="KW-0274">FAD</keyword>
<keyword id="KW-0285">Flavoprotein</keyword>
<keyword id="KW-0560">Oxidoreductase</keyword>
<keyword id="KW-0843">Virulence</keyword>
<evidence type="ECO:0000250" key="1">
    <source>
        <dbReference type="UniProtKB" id="P21685"/>
    </source>
</evidence>
<evidence type="ECO:0000250" key="2">
    <source>
        <dbReference type="UniProtKB" id="Q2FV57"/>
    </source>
</evidence>
<evidence type="ECO:0000255" key="3"/>
<reference key="1">
    <citation type="journal article" date="2004" name="Proc. Natl. Acad. Sci. U.S.A.">
        <title>Complete genomes of two clinical Staphylococcus aureus strains: evidence for the rapid evolution of virulence and drug resistance.</title>
        <authorList>
            <person name="Holden M.T.G."/>
            <person name="Feil E.J."/>
            <person name="Lindsay J.A."/>
            <person name="Peacock S.J."/>
            <person name="Day N.P.J."/>
            <person name="Enright M.C."/>
            <person name="Foster T.J."/>
            <person name="Moore C.E."/>
            <person name="Hurst L."/>
            <person name="Atkin R."/>
            <person name="Barron A."/>
            <person name="Bason N."/>
            <person name="Bentley S.D."/>
            <person name="Chillingworth C."/>
            <person name="Chillingworth T."/>
            <person name="Churcher C."/>
            <person name="Clark L."/>
            <person name="Corton C."/>
            <person name="Cronin A."/>
            <person name="Doggett J."/>
            <person name="Dowd L."/>
            <person name="Feltwell T."/>
            <person name="Hance Z."/>
            <person name="Harris B."/>
            <person name="Hauser H."/>
            <person name="Holroyd S."/>
            <person name="Jagels K."/>
            <person name="James K.D."/>
            <person name="Lennard N."/>
            <person name="Line A."/>
            <person name="Mayes R."/>
            <person name="Moule S."/>
            <person name="Mungall K."/>
            <person name="Ormond D."/>
            <person name="Quail M.A."/>
            <person name="Rabbinowitsch E."/>
            <person name="Rutherford K.M."/>
            <person name="Sanders M."/>
            <person name="Sharp S."/>
            <person name="Simmonds M."/>
            <person name="Stevens K."/>
            <person name="Whitehead S."/>
            <person name="Barrell B.G."/>
            <person name="Spratt B.G."/>
            <person name="Parkhill J."/>
        </authorList>
    </citation>
    <scope>NUCLEOTIDE SEQUENCE [LARGE SCALE GENOMIC DNA]</scope>
    <source>
        <strain>MSSA476</strain>
    </source>
</reference>
<organism>
    <name type="scientific">Staphylococcus aureus (strain MSSA476)</name>
    <dbReference type="NCBI Taxonomy" id="282459"/>
    <lineage>
        <taxon>Bacteria</taxon>
        <taxon>Bacillati</taxon>
        <taxon>Bacillota</taxon>
        <taxon>Bacilli</taxon>
        <taxon>Bacillales</taxon>
        <taxon>Staphylococcaceae</taxon>
        <taxon>Staphylococcus</taxon>
    </lineage>
</organism>
<accession>Q6G6B0</accession>
<sequence length="497" mass="57169">MTKHIIVIGGGLGGISAAIRMAQSGYSVSLYEQNNHIGGKVNRHESDGFGFDLGPSILTMPYIFEKLFEYSKKQMSDYVTIKRLPHQWRSFFPDGTTIDLYEGIKETGQHNAILSKQDIEELQNYLNYTRRIDRITEKGYFNYGLDTLSQIIKFHGPLNALINYDYVHTMQQAIDKRISNPYLRQMLGYFIKYVGSSSYDAPAVLSMLFHMQQEQGLWYVEGGIHHLANALEKLAREEGVTIHTGARVDNIKTYQRRVTGVRLDTGEFVKADYIISNMEVIPTYKYLIHLDTQRLNKLEREFEPASSGYVMHLGVACQYPQLAHHNFFFTENAYLNYQQVFHEKVLPDDPTIYLVNTNKTDHTQAPVGYENIKVLPHIPYIQDQPFTTEDYAKFRDKILDKLEKMGLTDLRKHIIYEDVWTPEDIEKNYRSNRGAIYGVVADKKKNKGFKFPKESQYFENLYFVGGSVNPGGGIPMVTLSGQQVADKINAREAKNRK</sequence>
<dbReference type="EC" id="1.14.99.-" evidence="2"/>
<dbReference type="EMBL" id="BX571857">
    <property type="protein sequence ID" value="CAG44266.1"/>
    <property type="molecule type" value="Genomic_DNA"/>
</dbReference>
<dbReference type="RefSeq" id="WP_000160455.1">
    <property type="nucleotide sequence ID" value="NC_002953.3"/>
</dbReference>
<dbReference type="SMR" id="Q6G6B0"/>
<dbReference type="KEGG" id="sas:SAS2450"/>
<dbReference type="HOGENOM" id="CLU_019722_2_1_9"/>
<dbReference type="UniPathway" id="UPA00029">
    <property type="reaction ID" value="UER00558"/>
</dbReference>
<dbReference type="GO" id="GO:0016491">
    <property type="term" value="F:oxidoreductase activity"/>
    <property type="evidence" value="ECO:0007669"/>
    <property type="project" value="UniProtKB-KW"/>
</dbReference>
<dbReference type="GO" id="GO:0016117">
    <property type="term" value="P:carotenoid biosynthetic process"/>
    <property type="evidence" value="ECO:0007669"/>
    <property type="project" value="UniProtKB-KW"/>
</dbReference>
<dbReference type="Gene3D" id="3.50.50.60">
    <property type="entry name" value="FAD/NAD(P)-binding domain"/>
    <property type="match status" value="2"/>
</dbReference>
<dbReference type="InterPro" id="IPR002937">
    <property type="entry name" value="Amino_oxidase"/>
</dbReference>
<dbReference type="InterPro" id="IPR014105">
    <property type="entry name" value="Carotenoid/retinoid_OxRdtase"/>
</dbReference>
<dbReference type="InterPro" id="IPR036188">
    <property type="entry name" value="FAD/NAD-bd_sf"/>
</dbReference>
<dbReference type="NCBIfam" id="TIGR02734">
    <property type="entry name" value="crtI_fam"/>
    <property type="match status" value="1"/>
</dbReference>
<dbReference type="PANTHER" id="PTHR43734:SF7">
    <property type="entry name" value="4,4'-DIAPONEUROSPORENE OXYGENASE"/>
    <property type="match status" value="1"/>
</dbReference>
<dbReference type="PANTHER" id="PTHR43734">
    <property type="entry name" value="PHYTOENE DESATURASE"/>
    <property type="match status" value="1"/>
</dbReference>
<dbReference type="Pfam" id="PF01593">
    <property type="entry name" value="Amino_oxidase"/>
    <property type="match status" value="1"/>
</dbReference>
<dbReference type="SUPFAM" id="SSF51905">
    <property type="entry name" value="FAD/NAD(P)-binding domain"/>
    <property type="match status" value="1"/>
</dbReference>
<protein>
    <recommendedName>
        <fullName evidence="2">4,4'-diaponeurosporene oxygenase</fullName>
        <ecNumber evidence="2">1.14.99.-</ecNumber>
    </recommendedName>
    <alternativeName>
        <fullName evidence="2">4,4'-diaponeurosporene oxidase</fullName>
    </alternativeName>
    <alternativeName>
        <fullName evidence="2">Carotenoid oxidase</fullName>
    </alternativeName>
</protein>
<feature type="chain" id="PRO_0000285227" description="4,4'-diaponeurosporene oxygenase">
    <location>
        <begin position="1"/>
        <end position="497"/>
    </location>
</feature>
<feature type="binding site" evidence="3">
    <location>
        <begin position="7"/>
        <end position="19"/>
    </location>
    <ligand>
        <name>FAD</name>
        <dbReference type="ChEBI" id="CHEBI:57692"/>
    </ligand>
</feature>
<gene>
    <name evidence="2" type="primary">crtP</name>
    <name type="ordered locus">SAS2450</name>
</gene>
<proteinExistence type="inferred from homology"/>
<name>CRTP_STAAS</name>
<comment type="function">
    <text evidence="2">Involved in the biosynthesis of the yellow-orange carotenoid staphyloxanthin, which plays a role in the virulence via its protective function against oxidative stress. Catalyzes the oxidation of the terminal methyl side group of 4,4'-diaponeurosporene to form 4,4'-diaponeurosporen-4-al.</text>
</comment>
<comment type="catalytic activity">
    <reaction evidence="2">
        <text>all-trans-4,4'-diaponeurosporene + 2 AH2 + 2 O2 = 4,4'-diaponeurosporenal + 2 A + 3 H2O</text>
        <dbReference type="Rhea" id="RHEA:56104"/>
        <dbReference type="ChEBI" id="CHEBI:13193"/>
        <dbReference type="ChEBI" id="CHEBI:15377"/>
        <dbReference type="ChEBI" id="CHEBI:15379"/>
        <dbReference type="ChEBI" id="CHEBI:17499"/>
        <dbReference type="ChEBI" id="CHEBI:62743"/>
        <dbReference type="ChEBI" id="CHEBI:79065"/>
    </reaction>
</comment>
<comment type="cofactor">
    <cofactor evidence="1">
        <name>FAD</name>
        <dbReference type="ChEBI" id="CHEBI:57692"/>
    </cofactor>
</comment>
<comment type="pathway">
    <text evidence="2">Carotenoid biosynthesis; staphyloxanthin biosynthesis; staphyloxanthin from farnesyl diphosphate: step 3/5.</text>
</comment>
<comment type="similarity">
    <text evidence="2">Belongs to the carotenoid/retinoid oxidoreductase family. CrtP subfamily.</text>
</comment>